<dbReference type="EMBL" id="AY673996">
    <property type="protein sequence ID" value="AAT79666.1"/>
    <property type="molecule type" value="Genomic_DNA"/>
</dbReference>
<dbReference type="RefSeq" id="YP_063591.1">
    <property type="nucleotide sequence ID" value="NC_006137.1"/>
</dbReference>
<dbReference type="SMR" id="Q6B8W9"/>
<dbReference type="GeneID" id="2944099"/>
<dbReference type="GO" id="GO:0009507">
    <property type="term" value="C:chloroplast"/>
    <property type="evidence" value="ECO:0007669"/>
    <property type="project" value="UniProtKB-SubCell"/>
</dbReference>
<dbReference type="GO" id="GO:0015935">
    <property type="term" value="C:small ribosomal subunit"/>
    <property type="evidence" value="ECO:0007669"/>
    <property type="project" value="InterPro"/>
</dbReference>
<dbReference type="GO" id="GO:0019843">
    <property type="term" value="F:rRNA binding"/>
    <property type="evidence" value="ECO:0007669"/>
    <property type="project" value="UniProtKB-UniRule"/>
</dbReference>
<dbReference type="GO" id="GO:0003735">
    <property type="term" value="F:structural constituent of ribosome"/>
    <property type="evidence" value="ECO:0007669"/>
    <property type="project" value="InterPro"/>
</dbReference>
<dbReference type="GO" id="GO:0006412">
    <property type="term" value="P:translation"/>
    <property type="evidence" value="ECO:0007669"/>
    <property type="project" value="UniProtKB-UniRule"/>
</dbReference>
<dbReference type="FunFam" id="3.30.160.20:FF:000001">
    <property type="entry name" value="30S ribosomal protein S5"/>
    <property type="match status" value="1"/>
</dbReference>
<dbReference type="FunFam" id="3.30.230.10:FF:000002">
    <property type="entry name" value="30S ribosomal protein S5"/>
    <property type="match status" value="1"/>
</dbReference>
<dbReference type="Gene3D" id="3.30.160.20">
    <property type="match status" value="1"/>
</dbReference>
<dbReference type="Gene3D" id="3.30.230.10">
    <property type="match status" value="1"/>
</dbReference>
<dbReference type="HAMAP" id="MF_01307_B">
    <property type="entry name" value="Ribosomal_uS5_B"/>
    <property type="match status" value="1"/>
</dbReference>
<dbReference type="InterPro" id="IPR020568">
    <property type="entry name" value="Ribosomal_Su5_D2-typ_SF"/>
</dbReference>
<dbReference type="InterPro" id="IPR000851">
    <property type="entry name" value="Ribosomal_uS5"/>
</dbReference>
<dbReference type="InterPro" id="IPR005712">
    <property type="entry name" value="Ribosomal_uS5_bac-type"/>
</dbReference>
<dbReference type="InterPro" id="IPR005324">
    <property type="entry name" value="Ribosomal_uS5_C"/>
</dbReference>
<dbReference type="InterPro" id="IPR013810">
    <property type="entry name" value="Ribosomal_uS5_N"/>
</dbReference>
<dbReference type="InterPro" id="IPR018192">
    <property type="entry name" value="Ribosomal_uS5_N_CS"/>
</dbReference>
<dbReference type="InterPro" id="IPR014721">
    <property type="entry name" value="Ribsml_uS5_D2-typ_fold_subgr"/>
</dbReference>
<dbReference type="NCBIfam" id="TIGR01021">
    <property type="entry name" value="rpsE_bact"/>
    <property type="match status" value="1"/>
</dbReference>
<dbReference type="PANTHER" id="PTHR48277">
    <property type="entry name" value="MITOCHONDRIAL RIBOSOMAL PROTEIN S5"/>
    <property type="match status" value="1"/>
</dbReference>
<dbReference type="PANTHER" id="PTHR48277:SF1">
    <property type="entry name" value="MITOCHONDRIAL RIBOSOMAL PROTEIN S5"/>
    <property type="match status" value="1"/>
</dbReference>
<dbReference type="Pfam" id="PF00333">
    <property type="entry name" value="Ribosomal_S5"/>
    <property type="match status" value="1"/>
</dbReference>
<dbReference type="Pfam" id="PF03719">
    <property type="entry name" value="Ribosomal_S5_C"/>
    <property type="match status" value="1"/>
</dbReference>
<dbReference type="SUPFAM" id="SSF54768">
    <property type="entry name" value="dsRNA-binding domain-like"/>
    <property type="match status" value="1"/>
</dbReference>
<dbReference type="SUPFAM" id="SSF54211">
    <property type="entry name" value="Ribosomal protein S5 domain 2-like"/>
    <property type="match status" value="1"/>
</dbReference>
<dbReference type="PROSITE" id="PS00585">
    <property type="entry name" value="RIBOSOMAL_S5"/>
    <property type="match status" value="1"/>
</dbReference>
<dbReference type="PROSITE" id="PS50881">
    <property type="entry name" value="S5_DSRBD"/>
    <property type="match status" value="1"/>
</dbReference>
<protein>
    <recommendedName>
        <fullName evidence="2">Small ribosomal subunit protein uS5c</fullName>
    </recommendedName>
    <alternativeName>
        <fullName>30S ribosomal protein S5, chloroplastic</fullName>
    </alternativeName>
</protein>
<feature type="chain" id="PRO_0000131667" description="Small ribosomal subunit protein uS5c">
    <location>
        <begin position="1"/>
        <end position="172"/>
    </location>
</feature>
<feature type="domain" description="S5 DRBM">
    <location>
        <begin position="15"/>
        <end position="78"/>
    </location>
</feature>
<accession>Q6B8W9</accession>
<comment type="function">
    <text evidence="1">With S4 and S12 plays an important role in translational accuracy.</text>
</comment>
<comment type="subunit">
    <text evidence="1">Part of the 30S ribosomal subunit. Contacts protein S4 (By similarity).</text>
</comment>
<comment type="subcellular location">
    <subcellularLocation>
        <location>Plastid</location>
        <location>Chloroplast</location>
    </subcellularLocation>
</comment>
<comment type="domain">
    <text>The N-terminal domain interacts with the head of the 30S subunit; the C-terminal domain interacts with the body and contacts protein S4. The interaction surface between S4 and S5 is involved in control of translational fidelity.</text>
</comment>
<comment type="similarity">
    <text evidence="2">Belongs to the universal ribosomal protein uS5 family.</text>
</comment>
<proteinExistence type="inferred from homology"/>
<gene>
    <name type="primary">rps5</name>
    <name type="ordered locus">Grc000085</name>
</gene>
<reference key="1">
    <citation type="journal article" date="2004" name="J. Mol. Evol.">
        <title>Comparative analysis of the complete plastid genome sequence of the red alga Gracilaria tenuistipitata var. liui provides insights into the evolution of rhodoplasts and their relationship to other plastids.</title>
        <authorList>
            <person name="Hagopian J.C."/>
            <person name="Reis M."/>
            <person name="Kitajima J.P."/>
            <person name="Bhattacharya D."/>
            <person name="de Oliveira M.C."/>
        </authorList>
    </citation>
    <scope>NUCLEOTIDE SEQUENCE [LARGE SCALE GENOMIC DNA]</scope>
</reference>
<evidence type="ECO:0000250" key="1"/>
<evidence type="ECO:0000305" key="2"/>
<keyword id="KW-0150">Chloroplast</keyword>
<keyword id="KW-0934">Plastid</keyword>
<keyword id="KW-0687">Ribonucleoprotein</keyword>
<keyword id="KW-0689">Ribosomal protein</keyword>
<keyword id="KW-0694">RNA-binding</keyword>
<keyword id="KW-0699">rRNA-binding</keyword>
<name>RR5_GRATL</name>
<geneLocation type="chloroplast"/>
<sequence length="172" mass="18548">MKKKSIKDKEQENNWEEKVVQVKRVTKVVKGGKKLSFRAILIVGNEKGEIGVGIGKASDVIGAVKKGVTDAKKHIINVPLTKSYSIPHPIEGISGAAKVILRPSAIGSGVIAGGSTRTVLELAGVKNILAKQLRSSNTLNNARAVLNALSQLRTFQNTAQNRDINIERLFNM</sequence>
<organism>
    <name type="scientific">Gracilaria tenuistipitata var. liui</name>
    <name type="common">Red alga</name>
    <dbReference type="NCBI Taxonomy" id="285951"/>
    <lineage>
        <taxon>Eukaryota</taxon>
        <taxon>Rhodophyta</taxon>
        <taxon>Florideophyceae</taxon>
        <taxon>Rhodymeniophycidae</taxon>
        <taxon>Gracilariales</taxon>
        <taxon>Gracilariaceae</taxon>
        <taxon>Gracilaria</taxon>
        <taxon>Gracilaria tenuistipitata</taxon>
    </lineage>
</organism>